<protein>
    <recommendedName>
        <fullName>FPRL1 inhibitory protein</fullName>
        <shortName>FLIPr</shortName>
    </recommendedName>
</protein>
<feature type="signal peptide" evidence="2">
    <location>
        <begin position="1"/>
        <end position="28"/>
    </location>
</feature>
<feature type="chain" id="PRO_0000286686" description="FPRL1 inhibitory protein">
    <location>
        <begin position="29"/>
        <end position="133"/>
    </location>
</feature>
<gene>
    <name type="primary">flr</name>
    <name type="ordered locus">SA1001</name>
</gene>
<proteinExistence type="inferred from homology"/>
<reference key="1">
    <citation type="journal article" date="2001" name="Lancet">
        <title>Whole genome sequencing of meticillin-resistant Staphylococcus aureus.</title>
        <authorList>
            <person name="Kuroda M."/>
            <person name="Ohta T."/>
            <person name="Uchiyama I."/>
            <person name="Baba T."/>
            <person name="Yuzawa H."/>
            <person name="Kobayashi I."/>
            <person name="Cui L."/>
            <person name="Oguchi A."/>
            <person name="Aoki K."/>
            <person name="Nagai Y."/>
            <person name="Lian J.-Q."/>
            <person name="Ito T."/>
            <person name="Kanamori M."/>
            <person name="Matsumaru H."/>
            <person name="Maruyama A."/>
            <person name="Murakami H."/>
            <person name="Hosoyama A."/>
            <person name="Mizutani-Ui Y."/>
            <person name="Takahashi N.K."/>
            <person name="Sawano T."/>
            <person name="Inoue R."/>
            <person name="Kaito C."/>
            <person name="Sekimizu K."/>
            <person name="Hirakawa H."/>
            <person name="Kuhara S."/>
            <person name="Goto S."/>
            <person name="Yabuzaki J."/>
            <person name="Kanehisa M."/>
            <person name="Yamashita A."/>
            <person name="Oshima K."/>
            <person name="Furuya K."/>
            <person name="Yoshino C."/>
            <person name="Shiba T."/>
            <person name="Hattori M."/>
            <person name="Ogasawara N."/>
            <person name="Hayashi H."/>
            <person name="Hiramatsu K."/>
        </authorList>
    </citation>
    <scope>NUCLEOTIDE SEQUENCE [LARGE SCALE GENOMIC DNA]</scope>
    <source>
        <strain>N315</strain>
    </source>
</reference>
<sequence length="133" mass="15216">MKKNITKTIIASTVIAAGLLTQTNDAKAFFSYEWKGLEIAKNLADQAKKDDERIDKLMKESDKNLTPYKAETVNDLYLIVKKLSQGDVKKAVVRIKDGGPRDYYTFDLTRPLEENRKNIKVVKNGEIDSIYWD</sequence>
<organism>
    <name type="scientific">Staphylococcus aureus (strain N315)</name>
    <dbReference type="NCBI Taxonomy" id="158879"/>
    <lineage>
        <taxon>Bacteria</taxon>
        <taxon>Bacillati</taxon>
        <taxon>Bacillota</taxon>
        <taxon>Bacilli</taxon>
        <taxon>Bacillales</taxon>
        <taxon>Staphylococcaceae</taxon>
        <taxon>Staphylococcus</taxon>
    </lineage>
</organism>
<dbReference type="EMBL" id="BA000018">
    <property type="protein sequence ID" value="BAB42251.1"/>
    <property type="molecule type" value="Genomic_DNA"/>
</dbReference>
<dbReference type="PIR" id="G89886">
    <property type="entry name" value="G89886"/>
</dbReference>
<dbReference type="RefSeq" id="WP_000739564.1">
    <property type="nucleotide sequence ID" value="NC_002745.2"/>
</dbReference>
<dbReference type="EnsemblBacteria" id="BAB42251">
    <property type="protein sequence ID" value="BAB42251"/>
    <property type="gene ID" value="BAB42251"/>
</dbReference>
<dbReference type="KEGG" id="sau:SA1001"/>
<dbReference type="HOGENOM" id="CLU_157996_0_0_9"/>
<dbReference type="GO" id="GO:0005576">
    <property type="term" value="C:extracellular region"/>
    <property type="evidence" value="ECO:0007669"/>
    <property type="project" value="UniProtKB-SubCell"/>
</dbReference>
<dbReference type="Gene3D" id="3.10.20.390">
    <property type="entry name" value="Chemotaxis-inhibiting protein CHIPS"/>
    <property type="match status" value="1"/>
</dbReference>
<dbReference type="InterPro" id="IPR023256">
    <property type="entry name" value="FLIPR"/>
</dbReference>
<dbReference type="InterPro" id="IPR038529">
    <property type="entry name" value="FLIPR/CHIP_sf"/>
</dbReference>
<dbReference type="InterPro" id="IPR023253">
    <property type="entry name" value="FLIPR/CHIPS"/>
</dbReference>
<dbReference type="NCBIfam" id="NF009592">
    <property type="entry name" value="PRK13033.1"/>
    <property type="match status" value="1"/>
</dbReference>
<dbReference type="Pfam" id="PF16104">
    <property type="entry name" value="FPRL1_inhibitor"/>
    <property type="match status" value="1"/>
</dbReference>
<dbReference type="PRINTS" id="PR02037">
    <property type="entry name" value="FLIPR"/>
</dbReference>
<dbReference type="PRINTS" id="PR02035">
    <property type="entry name" value="FLIPRCHIPS"/>
</dbReference>
<accession>Q7A638</accession>
<evidence type="ECO:0000250" key="1"/>
<evidence type="ECO:0000255" key="2"/>
<evidence type="ECO:0000305" key="3"/>
<comment type="function">
    <text evidence="1">May be involved in countering the first line of host defense mechanisms. Impairs the leukocyte response to FPRL1 agonists by binding directly to host FPRL1 (By similarity).</text>
</comment>
<comment type="subcellular location">
    <subcellularLocation>
        <location evidence="1">Secreted</location>
    </subcellularLocation>
</comment>
<comment type="similarity">
    <text evidence="3">Belongs to the CHIPS/FLIPr family.</text>
</comment>
<name>FLIPR_STAAN</name>
<keyword id="KW-0964">Secreted</keyword>
<keyword id="KW-0732">Signal</keyword>
<keyword id="KW-0843">Virulence</keyword>